<evidence type="ECO:0000250" key="1">
    <source>
        <dbReference type="UniProtKB" id="Q3MIW9"/>
    </source>
</evidence>
<evidence type="ECO:0000255" key="2"/>
<evidence type="ECO:0000256" key="3">
    <source>
        <dbReference type="SAM" id="MobiDB-lite"/>
    </source>
</evidence>
<evidence type="ECO:0000305" key="4"/>
<evidence type="ECO:0000312" key="5">
    <source>
        <dbReference type="MGI" id="MGI:2685476"/>
    </source>
</evidence>
<organism>
    <name type="scientific">Mus musculus</name>
    <name type="common">Mouse</name>
    <dbReference type="NCBI Taxonomy" id="10090"/>
    <lineage>
        <taxon>Eukaryota</taxon>
        <taxon>Metazoa</taxon>
        <taxon>Chordata</taxon>
        <taxon>Craniata</taxon>
        <taxon>Vertebrata</taxon>
        <taxon>Euteleostomi</taxon>
        <taxon>Mammalia</taxon>
        <taxon>Eutheria</taxon>
        <taxon>Euarchontoglires</taxon>
        <taxon>Glires</taxon>
        <taxon>Rodentia</taxon>
        <taxon>Myomorpha</taxon>
        <taxon>Muroidea</taxon>
        <taxon>Muridae</taxon>
        <taxon>Murinae</taxon>
        <taxon>Mus</taxon>
        <taxon>Mus</taxon>
    </lineage>
</organism>
<reference key="1">
    <citation type="journal article" date="2005" name="Science">
        <title>The transcriptional landscape of the mammalian genome.</title>
        <authorList>
            <person name="Carninci P."/>
            <person name="Kasukawa T."/>
            <person name="Katayama S."/>
            <person name="Gough J."/>
            <person name="Frith M.C."/>
            <person name="Maeda N."/>
            <person name="Oyama R."/>
            <person name="Ravasi T."/>
            <person name="Lenhard B."/>
            <person name="Wells C."/>
            <person name="Kodzius R."/>
            <person name="Shimokawa K."/>
            <person name="Bajic V.B."/>
            <person name="Brenner S.E."/>
            <person name="Batalov S."/>
            <person name="Forrest A.R."/>
            <person name="Zavolan M."/>
            <person name="Davis M.J."/>
            <person name="Wilming L.G."/>
            <person name="Aidinis V."/>
            <person name="Allen J.E."/>
            <person name="Ambesi-Impiombato A."/>
            <person name="Apweiler R."/>
            <person name="Aturaliya R.N."/>
            <person name="Bailey T.L."/>
            <person name="Bansal M."/>
            <person name="Baxter L."/>
            <person name="Beisel K.W."/>
            <person name="Bersano T."/>
            <person name="Bono H."/>
            <person name="Chalk A.M."/>
            <person name="Chiu K.P."/>
            <person name="Choudhary V."/>
            <person name="Christoffels A."/>
            <person name="Clutterbuck D.R."/>
            <person name="Crowe M.L."/>
            <person name="Dalla E."/>
            <person name="Dalrymple B.P."/>
            <person name="de Bono B."/>
            <person name="Della Gatta G."/>
            <person name="di Bernardo D."/>
            <person name="Down T."/>
            <person name="Engstrom P."/>
            <person name="Fagiolini M."/>
            <person name="Faulkner G."/>
            <person name="Fletcher C.F."/>
            <person name="Fukushima T."/>
            <person name="Furuno M."/>
            <person name="Futaki S."/>
            <person name="Gariboldi M."/>
            <person name="Georgii-Hemming P."/>
            <person name="Gingeras T.R."/>
            <person name="Gojobori T."/>
            <person name="Green R.E."/>
            <person name="Gustincich S."/>
            <person name="Harbers M."/>
            <person name="Hayashi Y."/>
            <person name="Hensch T.K."/>
            <person name="Hirokawa N."/>
            <person name="Hill D."/>
            <person name="Huminiecki L."/>
            <person name="Iacono M."/>
            <person name="Ikeo K."/>
            <person name="Iwama A."/>
            <person name="Ishikawa T."/>
            <person name="Jakt M."/>
            <person name="Kanapin A."/>
            <person name="Katoh M."/>
            <person name="Kawasawa Y."/>
            <person name="Kelso J."/>
            <person name="Kitamura H."/>
            <person name="Kitano H."/>
            <person name="Kollias G."/>
            <person name="Krishnan S.P."/>
            <person name="Kruger A."/>
            <person name="Kummerfeld S.K."/>
            <person name="Kurochkin I.V."/>
            <person name="Lareau L.F."/>
            <person name="Lazarevic D."/>
            <person name="Lipovich L."/>
            <person name="Liu J."/>
            <person name="Liuni S."/>
            <person name="McWilliam S."/>
            <person name="Madan Babu M."/>
            <person name="Madera M."/>
            <person name="Marchionni L."/>
            <person name="Matsuda H."/>
            <person name="Matsuzawa S."/>
            <person name="Miki H."/>
            <person name="Mignone F."/>
            <person name="Miyake S."/>
            <person name="Morris K."/>
            <person name="Mottagui-Tabar S."/>
            <person name="Mulder N."/>
            <person name="Nakano N."/>
            <person name="Nakauchi H."/>
            <person name="Ng P."/>
            <person name="Nilsson R."/>
            <person name="Nishiguchi S."/>
            <person name="Nishikawa S."/>
            <person name="Nori F."/>
            <person name="Ohara O."/>
            <person name="Okazaki Y."/>
            <person name="Orlando V."/>
            <person name="Pang K.C."/>
            <person name="Pavan W.J."/>
            <person name="Pavesi G."/>
            <person name="Pesole G."/>
            <person name="Petrovsky N."/>
            <person name="Piazza S."/>
            <person name="Reed J."/>
            <person name="Reid J.F."/>
            <person name="Ring B.Z."/>
            <person name="Ringwald M."/>
            <person name="Rost B."/>
            <person name="Ruan Y."/>
            <person name="Salzberg S.L."/>
            <person name="Sandelin A."/>
            <person name="Schneider C."/>
            <person name="Schoenbach C."/>
            <person name="Sekiguchi K."/>
            <person name="Semple C.A."/>
            <person name="Seno S."/>
            <person name="Sessa L."/>
            <person name="Sheng Y."/>
            <person name="Shibata Y."/>
            <person name="Shimada H."/>
            <person name="Shimada K."/>
            <person name="Silva D."/>
            <person name="Sinclair B."/>
            <person name="Sperling S."/>
            <person name="Stupka E."/>
            <person name="Sugiura K."/>
            <person name="Sultana R."/>
            <person name="Takenaka Y."/>
            <person name="Taki K."/>
            <person name="Tammoja K."/>
            <person name="Tan S.L."/>
            <person name="Tang S."/>
            <person name="Taylor M.S."/>
            <person name="Tegner J."/>
            <person name="Teichmann S.A."/>
            <person name="Ueda H.R."/>
            <person name="van Nimwegen E."/>
            <person name="Verardo R."/>
            <person name="Wei C.L."/>
            <person name="Yagi K."/>
            <person name="Yamanishi H."/>
            <person name="Zabarovsky E."/>
            <person name="Zhu S."/>
            <person name="Zimmer A."/>
            <person name="Hide W."/>
            <person name="Bult C."/>
            <person name="Grimmond S.M."/>
            <person name="Teasdale R.D."/>
            <person name="Liu E.T."/>
            <person name="Brusic V."/>
            <person name="Quackenbush J."/>
            <person name="Wahlestedt C."/>
            <person name="Mattick J.S."/>
            <person name="Hume D.A."/>
            <person name="Kai C."/>
            <person name="Sasaki D."/>
            <person name="Tomaru Y."/>
            <person name="Fukuda S."/>
            <person name="Kanamori-Katayama M."/>
            <person name="Suzuki M."/>
            <person name="Aoki J."/>
            <person name="Arakawa T."/>
            <person name="Iida J."/>
            <person name="Imamura K."/>
            <person name="Itoh M."/>
            <person name="Kato T."/>
            <person name="Kawaji H."/>
            <person name="Kawagashira N."/>
            <person name="Kawashima T."/>
            <person name="Kojima M."/>
            <person name="Kondo S."/>
            <person name="Konno H."/>
            <person name="Nakano K."/>
            <person name="Ninomiya N."/>
            <person name="Nishio T."/>
            <person name="Okada M."/>
            <person name="Plessy C."/>
            <person name="Shibata K."/>
            <person name="Shiraki T."/>
            <person name="Suzuki S."/>
            <person name="Tagami M."/>
            <person name="Waki K."/>
            <person name="Watahiki A."/>
            <person name="Okamura-Oho Y."/>
            <person name="Suzuki H."/>
            <person name="Kawai J."/>
            <person name="Hayashizaki Y."/>
        </authorList>
    </citation>
    <scope>NUCLEOTIDE SEQUENCE [LARGE SCALE MRNA]</scope>
    <source>
        <strain>C57BL/6J</strain>
        <tissue>Lung</tissue>
        <tissue>Stomach</tissue>
    </source>
</reference>
<sequence>MAQPTSGLYSTFGFFICLLFFPASWEAGANTFQELQKTGEPPKFDHLLPLTQGLTHRASSDQKTSRQHPPDLPEATATQKAKNQCNTTRLVKPVHTPLDNAKAADYGNTTVRHEMPPASEKDLSSQGKHLMARNERSADDPRSTTSENGSDGKRLTSAPRRNTSCMPSTRRTSLTTKSGMRASPMGASASLRTTSQKPTTFHVSELIRQSSSPVYATETPRTSYNTLKTLTTSGPEHHTIPFASDKSVQITTEHIKEATSASEITRTQSTFTKYEGKTSPASESSSQAQVLPIKHHTTSASENTIPVSAKSTPSTEKATKPTASPTVFQRKTIVATKTVRATRTSERTPVFLETTQPAKATEDKSSTVPSHVHKTETMHQGTVGSLTSRTNLGLSTSEAHYPQQSTHSLPGGLHAAGETGENNSFPVWAIVIVILMAVIILLVFIGLILLVSCASRARHVLTQNSEEPEPQPEDKGSRNSYPVYLMEQQNLNLNQIPSPP</sequence>
<name>MUCL3_MOUSE</name>
<proteinExistence type="evidence at transcript level"/>
<dbReference type="EMBL" id="AK131887">
    <property type="protein sequence ID" value="BAE20852.1"/>
    <property type="molecule type" value="mRNA"/>
</dbReference>
<dbReference type="EMBL" id="AK164929">
    <property type="protein sequence ID" value="BAE37972.1"/>
    <property type="molecule type" value="mRNA"/>
</dbReference>
<dbReference type="CCDS" id="CCDS28701.1"/>
<dbReference type="RefSeq" id="NP_001028538.1">
    <property type="nucleotide sequence ID" value="NM_001033366.3"/>
</dbReference>
<dbReference type="STRING" id="10090.ENSMUSP00000093120"/>
<dbReference type="GlyCosmos" id="Q3TNW5">
    <property type="glycosylation" value="2 sites, No reported glycans"/>
</dbReference>
<dbReference type="GlyGen" id="Q3TNW5">
    <property type="glycosylation" value="2 sites"/>
</dbReference>
<dbReference type="iPTMnet" id="Q3TNW5"/>
<dbReference type="PhosphoSitePlus" id="Q3TNW5"/>
<dbReference type="PaxDb" id="10090-ENSMUSP00000093120"/>
<dbReference type="ProteomicsDB" id="279562"/>
<dbReference type="Antibodypedia" id="2593">
    <property type="antibodies" value="157 antibodies from 21 providers"/>
</dbReference>
<dbReference type="Ensembl" id="ENSMUST00000095467.4">
    <property type="protein sequence ID" value="ENSMUSP00000093120.4"/>
    <property type="gene ID" value="ENSMUSG00000073408.3"/>
</dbReference>
<dbReference type="GeneID" id="268949"/>
<dbReference type="KEGG" id="mmu:268949"/>
<dbReference type="UCSC" id="uc012aro.1">
    <property type="organism name" value="mouse"/>
</dbReference>
<dbReference type="AGR" id="MGI:2685476"/>
<dbReference type="CTD" id="135656"/>
<dbReference type="MGI" id="MGI:2685476">
    <property type="gene designation" value="Mucl3"/>
</dbReference>
<dbReference type="VEuPathDB" id="HostDB:ENSMUSG00000073408"/>
<dbReference type="eggNOG" id="ENOG502S7U9">
    <property type="taxonomic scope" value="Eukaryota"/>
</dbReference>
<dbReference type="GeneTree" id="ENSGT00390000016847"/>
<dbReference type="HOGENOM" id="CLU_040657_1_0_1"/>
<dbReference type="InParanoid" id="Q3TNW5"/>
<dbReference type="OMA" id="TFGLQCC"/>
<dbReference type="OrthoDB" id="9838476at2759"/>
<dbReference type="PhylomeDB" id="Q3TNW5"/>
<dbReference type="TreeFam" id="TF338742"/>
<dbReference type="BioGRID-ORCS" id="268949">
    <property type="hits" value="1 hit in 77 CRISPR screens"/>
</dbReference>
<dbReference type="ChiTaRS" id="Mucl3">
    <property type="organism name" value="mouse"/>
</dbReference>
<dbReference type="PRO" id="PR:Q3TNW5"/>
<dbReference type="Proteomes" id="UP000000589">
    <property type="component" value="Chromosome 17"/>
</dbReference>
<dbReference type="RNAct" id="Q3TNW5">
    <property type="molecule type" value="protein"/>
</dbReference>
<dbReference type="Bgee" id="ENSMUSG00000073408">
    <property type="expression patterns" value="Expressed in stomach and 23 other cell types or tissues"/>
</dbReference>
<dbReference type="GO" id="GO:0005737">
    <property type="term" value="C:cytoplasm"/>
    <property type="evidence" value="ECO:0007669"/>
    <property type="project" value="UniProtKB-SubCell"/>
</dbReference>
<dbReference type="GO" id="GO:0005886">
    <property type="term" value="C:plasma membrane"/>
    <property type="evidence" value="ECO:0007669"/>
    <property type="project" value="UniProtKB-SubCell"/>
</dbReference>
<dbReference type="InterPro" id="IPR026623">
    <property type="entry name" value="MUCL3"/>
</dbReference>
<dbReference type="PANTHER" id="PTHR22094">
    <property type="entry name" value="DIFFUSE PANBRONCHIOLITIS CRITICAL REGION GENE 1"/>
    <property type="match status" value="1"/>
</dbReference>
<dbReference type="PANTHER" id="PTHR22094:SF0">
    <property type="entry name" value="MUCIN-LIKE PROTEIN 3"/>
    <property type="match status" value="1"/>
</dbReference>
<comment type="function">
    <text evidence="1">May modulate NF-kappaB signaling and play a role in cell growth.</text>
</comment>
<comment type="subcellular location">
    <subcellularLocation>
        <location evidence="1">Cell membrane</location>
        <topology evidence="1">Single-pass type I membrane protein</topology>
    </subcellularLocation>
    <subcellularLocation>
        <location evidence="1">Cytoplasm</location>
    </subcellularLocation>
</comment>
<protein>
    <recommendedName>
        <fullName evidence="4">Mucin-like protein 3</fullName>
    </recommendedName>
    <alternativeName>
        <fullName>Diffuse panbronchiolitis critical region protein 1 homolog</fullName>
    </alternativeName>
</protein>
<gene>
    <name evidence="5" type="primary">Mucl3</name>
    <name evidence="5" type="synonym">Dpcr1</name>
    <name type="synonym">Gm630</name>
</gene>
<keyword id="KW-1003">Cell membrane</keyword>
<keyword id="KW-0963">Cytoplasm</keyword>
<keyword id="KW-0325">Glycoprotein</keyword>
<keyword id="KW-0472">Membrane</keyword>
<keyword id="KW-1185">Reference proteome</keyword>
<keyword id="KW-0732">Signal</keyword>
<keyword id="KW-0812">Transmembrane</keyword>
<keyword id="KW-1133">Transmembrane helix</keyword>
<accession>Q3TNW5</accession>
<feature type="signal peptide" evidence="2">
    <location>
        <begin position="1"/>
        <end position="27"/>
    </location>
</feature>
<feature type="chain" id="PRO_0000318687" description="Mucin-like protein 3">
    <location>
        <begin position="28"/>
        <end position="500"/>
    </location>
</feature>
<feature type="topological domain" description="Extracellular" evidence="2">
    <location>
        <begin position="28"/>
        <end position="429"/>
    </location>
</feature>
<feature type="transmembrane region" description="Helical" evidence="2">
    <location>
        <begin position="430"/>
        <end position="450"/>
    </location>
</feature>
<feature type="topological domain" description="Cytoplasmic" evidence="2">
    <location>
        <begin position="451"/>
        <end position="500"/>
    </location>
</feature>
<feature type="region of interest" description="Disordered" evidence="3">
    <location>
        <begin position="55"/>
        <end position="198"/>
    </location>
</feature>
<feature type="region of interest" description="Disordered" evidence="3">
    <location>
        <begin position="275"/>
        <end position="324"/>
    </location>
</feature>
<feature type="compositionally biased region" description="Basic and acidic residues" evidence="3">
    <location>
        <begin position="58"/>
        <end position="71"/>
    </location>
</feature>
<feature type="compositionally biased region" description="Polar residues" evidence="3">
    <location>
        <begin position="76"/>
        <end position="89"/>
    </location>
</feature>
<feature type="compositionally biased region" description="Basic and acidic residues" evidence="3">
    <location>
        <begin position="111"/>
        <end position="123"/>
    </location>
</feature>
<feature type="compositionally biased region" description="Basic and acidic residues" evidence="3">
    <location>
        <begin position="132"/>
        <end position="142"/>
    </location>
</feature>
<feature type="compositionally biased region" description="Polar residues" evidence="3">
    <location>
        <begin position="159"/>
        <end position="178"/>
    </location>
</feature>
<feature type="compositionally biased region" description="Polar residues" evidence="3">
    <location>
        <begin position="279"/>
        <end position="289"/>
    </location>
</feature>
<feature type="compositionally biased region" description="Polar residues" evidence="3">
    <location>
        <begin position="298"/>
        <end position="324"/>
    </location>
</feature>
<feature type="glycosylation site" description="N-linked (GlcNAc...) asparagine" evidence="2">
    <location>
        <position position="108"/>
    </location>
</feature>
<feature type="glycosylation site" description="N-linked (GlcNAc...) asparagine" evidence="2">
    <location>
        <position position="148"/>
    </location>
</feature>